<proteinExistence type="evidence at transcript level"/>
<dbReference type="EMBL" id="EF677743">
    <property type="protein sequence ID" value="ABR17547.1"/>
    <property type="molecule type" value="mRNA"/>
</dbReference>
<dbReference type="OMA" id="PNVGDCE"/>
<dbReference type="GO" id="GO:0005758">
    <property type="term" value="C:mitochondrial intermembrane space"/>
    <property type="evidence" value="ECO:0007669"/>
    <property type="project" value="UniProtKB-SubCell"/>
</dbReference>
<dbReference type="GO" id="GO:0051537">
    <property type="term" value="F:2 iron, 2 sulfur cluster binding"/>
    <property type="evidence" value="ECO:0007669"/>
    <property type="project" value="UniProtKB-UniRule"/>
</dbReference>
<dbReference type="GO" id="GO:0051539">
    <property type="term" value="F:4 iron, 4 sulfur cluster binding"/>
    <property type="evidence" value="ECO:0007669"/>
    <property type="project" value="UniProtKB-KW"/>
</dbReference>
<dbReference type="GO" id="GO:0009055">
    <property type="term" value="F:electron transfer activity"/>
    <property type="evidence" value="ECO:0007669"/>
    <property type="project" value="UniProtKB-UniRule"/>
</dbReference>
<dbReference type="GO" id="GO:0046872">
    <property type="term" value="F:metal ion binding"/>
    <property type="evidence" value="ECO:0007669"/>
    <property type="project" value="UniProtKB-KW"/>
</dbReference>
<dbReference type="GO" id="GO:0016226">
    <property type="term" value="P:iron-sulfur cluster assembly"/>
    <property type="evidence" value="ECO:0007669"/>
    <property type="project" value="UniProtKB-UniRule"/>
</dbReference>
<dbReference type="Gene3D" id="3.40.50.150">
    <property type="entry name" value="Vaccinia Virus protein VP39"/>
    <property type="match status" value="1"/>
</dbReference>
<dbReference type="HAMAP" id="MF_03115">
    <property type="entry name" value="Anamorsin"/>
    <property type="match status" value="1"/>
</dbReference>
<dbReference type="InterPro" id="IPR007785">
    <property type="entry name" value="Anamorsin"/>
</dbReference>
<dbReference type="InterPro" id="IPR049011">
    <property type="entry name" value="Anamorsin_N_metazoan"/>
</dbReference>
<dbReference type="InterPro" id="IPR046408">
    <property type="entry name" value="CIAPIN1"/>
</dbReference>
<dbReference type="InterPro" id="IPR029063">
    <property type="entry name" value="SAM-dependent_MTases_sf"/>
</dbReference>
<dbReference type="PANTHER" id="PTHR13273">
    <property type="entry name" value="ANAMORSIN"/>
    <property type="match status" value="1"/>
</dbReference>
<dbReference type="PANTHER" id="PTHR13273:SF15">
    <property type="entry name" value="ANAMORSIN HOMOLOG 2-LIKE ISOFORM X1"/>
    <property type="match status" value="1"/>
</dbReference>
<dbReference type="Pfam" id="PF20922">
    <property type="entry name" value="Anamorsin_N"/>
    <property type="match status" value="1"/>
</dbReference>
<dbReference type="Pfam" id="PF05093">
    <property type="entry name" value="CIAPIN1"/>
    <property type="match status" value="1"/>
</dbReference>
<dbReference type="SUPFAM" id="SSF53335">
    <property type="entry name" value="S-adenosyl-L-methionine-dependent methyltransferases"/>
    <property type="match status" value="1"/>
</dbReference>
<sequence length="277" mass="29850">MDTQPIVLVITDSVTLHAAIVSWGLQNFQVKAEDLHVITQADRLEGKLNLKSSSLDAVVSISALHTQQWLLELARVLRPGGIIVLQNPNSVNDDVKETLSALERILLLAGFVLSEGADGSIDGLGPLAVKGRKPAWDTGSSFKLKKKVAQKPANVVTFDIPAFKVQLGDDLDDLIDEDSLLTEEDLKKPDLPPVDDCEVGKAGRKACKNCTCGRVEMEEKQEKLGLPSDLLDNPQSSCGSCGLGDAFRCSTCPYKGLPPFKLGEKISLSQSFLTADI</sequence>
<comment type="function">
    <text evidence="1">Component of the cytosolic iron-sulfur (Fe-S) protein assembly (CIA) machinery. Required for the maturation of extramitochondrial Fe-S proteins. Part of an electron transfer chain functioning in an early step of cytosolic Fe-S biogenesis, facilitating the de novo assembly of a [4Fe-4S] cluster on the cytosolic Fe-S scaffold complex. Electrons are transferred from NADPH via a FAD- and FMN-containing diflavin oxidoreductase. Together with the diflavin oxidoreductase, also required for the assembly of the diferric tyrosyl radical cofactor of ribonucleotide reductase (RNR), probably by providing electrons for reduction during radical cofactor maturation in the catalytic small subunit.</text>
</comment>
<comment type="cofactor">
    <cofactor evidence="1">
        <name>[2Fe-2S] cluster</name>
        <dbReference type="ChEBI" id="CHEBI:190135"/>
    </cofactor>
</comment>
<comment type="cofactor">
    <cofactor evidence="1">
        <name>[4Fe-4S] cluster</name>
        <dbReference type="ChEBI" id="CHEBI:49883"/>
    </cofactor>
</comment>
<comment type="subunit">
    <text evidence="1">Monomer.</text>
</comment>
<comment type="subcellular location">
    <subcellularLocation>
        <location evidence="1">Cytoplasm</location>
    </subcellularLocation>
    <subcellularLocation>
        <location evidence="1">Mitochondrion intermembrane space</location>
    </subcellularLocation>
</comment>
<comment type="domain">
    <text evidence="1">The C-terminal domain binds 2 Fe-S clusters but is otherwise mostly in an intrinsically disordered conformation.</text>
</comment>
<comment type="domain">
    <text evidence="1">The N-terminal domain has structural similarity with S-adenosyl-L-methionine-dependent methyltransferases, but does not bind S-adenosyl-L-methionine. It is required for correct assembly of the 2 Fe-S clusters.</text>
</comment>
<comment type="domain">
    <text evidence="1">The twin Cx2C motifs are involved in the recognition by the mitochondrial MIA40-ERV1 disulfide relay system. The formation of 2 disulfide bonds in the Cx2C motifs through dithiol/disulfide exchange reactions effectively traps the protein in the mitochondrial intermembrane space.</text>
</comment>
<comment type="similarity">
    <text evidence="1">Belongs to the anamorsin family.</text>
</comment>
<feature type="chain" id="PRO_0000392345" description="Anamorsin homolog 2">
    <location>
        <begin position="1"/>
        <end position="277"/>
    </location>
</feature>
<feature type="region of interest" description="N-terminal SAM-like domain" evidence="1">
    <location>
        <begin position="1"/>
        <end position="141"/>
    </location>
</feature>
<feature type="region of interest" description="Linker" evidence="1">
    <location>
        <begin position="141"/>
        <end position="186"/>
    </location>
</feature>
<feature type="region of interest" description="Fe-S binding site A" evidence="1">
    <location>
        <begin position="197"/>
        <end position="212"/>
    </location>
</feature>
<feature type="region of interest" description="Fe-S binding site B" evidence="1">
    <location>
        <begin position="238"/>
        <end position="252"/>
    </location>
</feature>
<feature type="short sequence motif" description="Cx2C motif 1" evidence="1">
    <location>
        <begin position="238"/>
        <end position="241"/>
    </location>
</feature>
<feature type="short sequence motif" description="Cx2C motif 2" evidence="1">
    <location>
        <begin position="249"/>
        <end position="252"/>
    </location>
</feature>
<feature type="binding site" evidence="1">
    <location>
        <position position="197"/>
    </location>
    <ligand>
        <name>[2Fe-2S] cluster</name>
        <dbReference type="ChEBI" id="CHEBI:190135"/>
    </ligand>
</feature>
<feature type="binding site" evidence="1">
    <location>
        <position position="207"/>
    </location>
    <ligand>
        <name>[2Fe-2S] cluster</name>
        <dbReference type="ChEBI" id="CHEBI:190135"/>
    </ligand>
</feature>
<feature type="binding site" evidence="1">
    <location>
        <position position="210"/>
    </location>
    <ligand>
        <name>[2Fe-2S] cluster</name>
        <dbReference type="ChEBI" id="CHEBI:190135"/>
    </ligand>
</feature>
<feature type="binding site" evidence="1">
    <location>
        <position position="212"/>
    </location>
    <ligand>
        <name>[2Fe-2S] cluster</name>
        <dbReference type="ChEBI" id="CHEBI:190135"/>
    </ligand>
</feature>
<feature type="binding site" evidence="1">
    <location>
        <position position="238"/>
    </location>
    <ligand>
        <name>[4Fe-4S] cluster</name>
        <dbReference type="ChEBI" id="CHEBI:49883"/>
    </ligand>
</feature>
<feature type="binding site" evidence="1">
    <location>
        <position position="241"/>
    </location>
    <ligand>
        <name>[4Fe-4S] cluster</name>
        <dbReference type="ChEBI" id="CHEBI:49883"/>
    </ligand>
</feature>
<feature type="binding site" evidence="1">
    <location>
        <position position="249"/>
    </location>
    <ligand>
        <name>[4Fe-4S] cluster</name>
        <dbReference type="ChEBI" id="CHEBI:49883"/>
    </ligand>
</feature>
<feature type="binding site" evidence="1">
    <location>
        <position position="252"/>
    </location>
    <ligand>
        <name>[4Fe-4S] cluster</name>
        <dbReference type="ChEBI" id="CHEBI:49883"/>
    </ligand>
</feature>
<accession>B8LPG7</accession>
<keyword id="KW-0001">2Fe-2S</keyword>
<keyword id="KW-0004">4Fe-4S</keyword>
<keyword id="KW-0963">Cytoplasm</keyword>
<keyword id="KW-0408">Iron</keyword>
<keyword id="KW-0411">Iron-sulfur</keyword>
<keyword id="KW-0479">Metal-binding</keyword>
<keyword id="KW-0496">Mitochondrion</keyword>
<name>DRE22_PICSI</name>
<reference key="1">
    <citation type="submission" date="2007-06" db="EMBL/GenBank/DDBJ databases">
        <title>Full length cDNA sequences from Sitka Spruce (Picea sitchensis).</title>
        <authorList>
            <person name="Ralph S.G."/>
            <person name="Chun H.E."/>
            <person name="Liao N."/>
            <person name="Ali J."/>
            <person name="Reid K."/>
            <person name="Kolosova N."/>
            <person name="Cooper N."/>
            <person name="Cullis C."/>
            <person name="Jancsik S."/>
            <person name="Moore R."/>
            <person name="Mayo M."/>
            <person name="Wagner S."/>
            <person name="Holt R.A."/>
            <person name="Jones S.J.M."/>
            <person name="Marra M.A."/>
            <person name="Ritland C.E."/>
            <person name="Ritland K."/>
            <person name="Bohlmann J."/>
        </authorList>
    </citation>
    <scope>NUCLEOTIDE SEQUENCE [LARGE SCALE MRNA]</scope>
</reference>
<evidence type="ECO:0000255" key="1">
    <source>
        <dbReference type="HAMAP-Rule" id="MF_03115"/>
    </source>
</evidence>
<organism>
    <name type="scientific">Picea sitchensis</name>
    <name type="common">Sitka spruce</name>
    <name type="synonym">Pinus sitchensis</name>
    <dbReference type="NCBI Taxonomy" id="3332"/>
    <lineage>
        <taxon>Eukaryota</taxon>
        <taxon>Viridiplantae</taxon>
        <taxon>Streptophyta</taxon>
        <taxon>Embryophyta</taxon>
        <taxon>Tracheophyta</taxon>
        <taxon>Spermatophyta</taxon>
        <taxon>Pinopsida</taxon>
        <taxon>Pinidae</taxon>
        <taxon>Conifers I</taxon>
        <taxon>Pinales</taxon>
        <taxon>Pinaceae</taxon>
        <taxon>Picea</taxon>
    </lineage>
</organism>
<protein>
    <recommendedName>
        <fullName evidence="1">Anamorsin homolog 2</fullName>
    </recommendedName>
    <alternativeName>
        <fullName evidence="1">Fe-S cluster assembly protein DRE2 homolog 2</fullName>
    </alternativeName>
</protein>